<reference key="1">
    <citation type="journal article" date="1987" name="Mol. Cell. Biol.">
        <title>Mouse protamine 2 is synthesized as a precursor whereas mouse protamine 1 is not.</title>
        <authorList>
            <person name="Yelick P.C."/>
            <person name="Balhorn R."/>
            <person name="Johnson P.A."/>
            <person name="Corzett M."/>
            <person name="Mazrimas J.A."/>
            <person name="Kleene K.C."/>
            <person name="Hecht N.B."/>
        </authorList>
    </citation>
    <scope>NUCLEOTIDE SEQUENCE [MRNA]</scope>
    <scope>PROTEIN SEQUENCE OF 45-64</scope>
</reference>
<reference key="2">
    <citation type="journal article" date="1988" name="Biochim. Biophys. Acta">
        <title>Sequence homologies in the mouse protamine 1 and 2 genes.</title>
        <authorList>
            <person name="Johnson P.A."/>
            <person name="Pschon J.J."/>
            <person name="Yelick P.C."/>
            <person name="Palmiter R.D."/>
            <person name="Hecht N.B."/>
        </authorList>
    </citation>
    <scope>NUCLEOTIDE SEQUENCE [GENOMIC DNA / MRNA]</scope>
</reference>
<reference key="3">
    <citation type="journal article" date="1987" name="Ann. N. Y. Acad. Sci.">
        <title>Gene expression during spermatogenesis.</title>
        <authorList>
            <person name="Hecht N.B."/>
        </authorList>
    </citation>
    <scope>NUCLEOTIDE SEQUENCE [MRNA]</scope>
</reference>
<reference key="4">
    <citation type="submission" date="1995-07" db="EMBL/GenBank/DDBJ databases">
        <authorList>
            <person name="Schlueter G."/>
            <person name="Engel W."/>
        </authorList>
    </citation>
    <scope>NUCLEOTIDE SEQUENCE [GENOMIC DNA]</scope>
    <source>
        <strain>C129</strain>
    </source>
</reference>
<reference key="5">
    <citation type="journal article" date="2004" name="Genome Res.">
        <title>The status, quality, and expansion of the NIH full-length cDNA project: the Mammalian Gene Collection (MGC).</title>
        <authorList>
            <consortium name="The MGC Project Team"/>
        </authorList>
    </citation>
    <scope>NUCLEOTIDE SEQUENCE [LARGE SCALE MRNA]</scope>
    <source>
        <tissue>Testis</tissue>
    </source>
</reference>
<reference key="6">
    <citation type="journal article" date="1988" name="Biochemistry">
        <title>Purification and characterization of mouse protamines P1 and P2. Amino acid sequence of P2.</title>
        <authorList>
            <person name="Bellve A.R."/>
            <person name="McKay D.J."/>
            <person name="Renaux B.S."/>
            <person name="Dixon G.H."/>
        </authorList>
    </citation>
    <scope>PROTEIN SEQUENCE OF 45-107</scope>
</reference>
<reference key="7">
    <citation type="journal article" date="1991" name="Eur. J. Biochem.">
        <title>Processing of the precursor of protamine P2 in mouse. Identification of intermediates by their insolubility in the presence of sodium dodecyl sulfate.</title>
        <authorList>
            <person name="Elsevier S.M."/>
            <person name="Noiran J."/>
            <person name="Carre-Eusebe D."/>
        </authorList>
    </citation>
    <scope>PROTEOLYTIC PROCESSING</scope>
</reference>
<reference key="8">
    <citation type="journal article" date="1991" name="Biochem. J.">
        <title>Processing of the precursor of protamine P2 in mouse. Peptide mapping and N-terminal sequence analysis of intermediates.</title>
        <authorList>
            <person name="Carre-Eusebe D."/>
            <person name="Lederer F."/>
            <person name="Le K.H.D."/>
            <person name="Elsevier S.M."/>
        </authorList>
    </citation>
    <scope>PROTEOLYTIC PROCESSING</scope>
</reference>
<reference key="9">
    <citation type="journal article" date="2003" name="Biol. Reprod.">
        <title>Protamine 2 deficiency leads to sperm DNA damage and embryo death in mice.</title>
        <authorList>
            <person name="Cho C."/>
            <person name="Jung-Ha H."/>
            <person name="Willis W.D."/>
            <person name="Goulding E.H."/>
            <person name="Stein P."/>
            <person name="Xu Z."/>
            <person name="Schultz R.M."/>
            <person name="Hecht N.B."/>
            <person name="Eddy E.M."/>
        </authorList>
    </citation>
    <scope>FUNCTION</scope>
    <scope>DISRUPTION PHENOTYPE</scope>
</reference>
<reference key="10">
    <citation type="journal article" date="2016" name="Am. J. Transl. Res.">
        <title>TDRP deficiency contributes to low sperm motility and is a potential risk factor for male infertility.</title>
        <authorList>
            <person name="Mao S."/>
            <person name="Wu F."/>
            <person name="Cao X."/>
            <person name="He M."/>
            <person name="Liu N."/>
            <person name="Wu H."/>
            <person name="Yang Z."/>
            <person name="Ding Q."/>
            <person name="Wang X."/>
        </authorList>
    </citation>
    <scope>INTERACTION WITH TDRP</scope>
</reference>
<reference key="11">
    <citation type="journal article" date="2017" name="Mol. Cell">
        <title>Histone variant H2A.L.2 guides transition protein-dependent protamine assembly in male germ cells.</title>
        <authorList>
            <person name="Barral S."/>
            <person name="Morozumi Y."/>
            <person name="Tanaka H."/>
            <person name="Montellier E."/>
            <person name="Govin J."/>
            <person name="de Dieuleveult M."/>
            <person name="Charbonnier G."/>
            <person name="Coute Y."/>
            <person name="Puthier D."/>
            <person name="Buchou T."/>
            <person name="Boussouar F."/>
            <person name="Urahama T."/>
            <person name="Fenaille F."/>
            <person name="Curtet S."/>
            <person name="Hery P."/>
            <person name="Fernandez-Nunez N."/>
            <person name="Shiota H."/>
            <person name="Gerard M."/>
            <person name="Rousseaux S."/>
            <person name="Kurumizaka H."/>
            <person name="Khochbin S."/>
        </authorList>
    </citation>
    <scope>FUNCTION</scope>
    <scope>PROTEOLYTIC PROCESSING</scope>
    <scope>SUBCELLULAR LOCATION</scope>
</reference>
<reference key="12">
    <citation type="journal article" date="2020" name="Cell Rep.">
        <title>PHF7 Modulates BRDT Stability and Histone-to-Protamine Exchange during Spermiogenesis.</title>
        <authorList>
            <person name="Kim C.R."/>
            <person name="Noda T."/>
            <person name="Kim H."/>
            <person name="Kim G."/>
            <person name="Park S."/>
            <person name="Na Y."/>
            <person name="Oura S."/>
            <person name="Shimada K."/>
            <person name="Bang I."/>
            <person name="Ahn J.Y."/>
            <person name="Kim Y.R."/>
            <person name="Oh S.K."/>
            <person name="Choi H.J."/>
            <person name="Kim J.S."/>
            <person name="Jung I."/>
            <person name="Lee H."/>
            <person name="Okada Y."/>
            <person name="Ikawa M."/>
            <person name="Baek S.H."/>
        </authorList>
    </citation>
    <scope>TISSUE SPECIFICITY</scope>
</reference>
<accession>P07978</accession>
<protein>
    <recommendedName>
        <fullName>Protamine-2</fullName>
    </recommendedName>
    <alternativeName>
        <fullName>Sperm histone P2</fullName>
    </alternativeName>
    <alternativeName>
        <fullName>Sperm protamine P2</fullName>
    </alternativeName>
    <component>
        <recommendedName>
            <fullName>PP2-A</fullName>
        </recommendedName>
    </component>
    <component>
        <recommendedName>
            <fullName>PP2-C</fullName>
        </recommendedName>
    </component>
    <component>
        <recommendedName>
            <fullName>PP2-D</fullName>
        </recommendedName>
    </component>
    <component>
        <recommendedName>
            <fullName>PP2-B</fullName>
        </recommendedName>
        <alternativeName>
            <fullName evidence="8">Protamine mP2</fullName>
        </alternativeName>
    </component>
</protein>
<gene>
    <name type="primary">Prm2</name>
</gene>
<proteinExistence type="evidence at protein level"/>
<organism>
    <name type="scientific">Mus musculus</name>
    <name type="common">Mouse</name>
    <dbReference type="NCBI Taxonomy" id="10090"/>
    <lineage>
        <taxon>Eukaryota</taxon>
        <taxon>Metazoa</taxon>
        <taxon>Chordata</taxon>
        <taxon>Craniata</taxon>
        <taxon>Vertebrata</taxon>
        <taxon>Euteleostomi</taxon>
        <taxon>Mammalia</taxon>
        <taxon>Eutheria</taxon>
        <taxon>Euarchontoglires</taxon>
        <taxon>Glires</taxon>
        <taxon>Rodentia</taxon>
        <taxon>Myomorpha</taxon>
        <taxon>Muroidea</taxon>
        <taxon>Muridae</taxon>
        <taxon>Murinae</taxon>
        <taxon>Mus</taxon>
        <taxon>Mus</taxon>
    </lineage>
</organism>
<keyword id="KW-0158">Chromosome</keyword>
<keyword id="KW-0217">Developmental protein</keyword>
<keyword id="KW-0221">Differentiation</keyword>
<keyword id="KW-0903">Direct protein sequencing</keyword>
<keyword id="KW-0226">DNA condensation</keyword>
<keyword id="KW-0238">DNA-binding</keyword>
<keyword id="KW-0544">Nucleosome core</keyword>
<keyword id="KW-0539">Nucleus</keyword>
<keyword id="KW-0597">Phosphoprotein</keyword>
<keyword id="KW-1185">Reference proteome</keyword>
<keyword id="KW-0744">Spermatogenesis</keyword>
<comment type="function">
    <text evidence="3 5">Protamines substitute for histones in the chromatin of sperm during the haploid phase of spermatogenesis. They compact sperm DNA into a highly condensed, stable and inactive complex.</text>
</comment>
<comment type="subunit">
    <text evidence="4">Interacts with TDRP.</text>
</comment>
<comment type="subcellular location">
    <subcellularLocation>
        <location>Nucleus</location>
    </subcellularLocation>
    <subcellularLocation>
        <location evidence="5">Chromosome</location>
    </subcellularLocation>
</comment>
<comment type="tissue specificity">
    <text evidence="6">Expressed in spermatids (at protein level).</text>
</comment>
<comment type="PTM">
    <text evidence="5">Proteolytic processing into mature chains is required for histone eviction during spermatogenesis (PubMed:28366643). Transition proteins (TNP1 and TNP2) are required for processing (PubMed:28366643).</text>
</comment>
<comment type="disruption phenotype">
    <text evidence="3">Male mice are sterile due to reduced compaction of chromatin in sperm.</text>
</comment>
<comment type="similarity">
    <text evidence="9">Belongs to the protamine P2 family.</text>
</comment>
<dbReference type="EMBL" id="M16456">
    <property type="protein sequence ID" value="AAA39981.1"/>
    <property type="molecule type" value="mRNA"/>
</dbReference>
<dbReference type="EMBL" id="X07626">
    <property type="protein sequence ID" value="CAA30473.1"/>
    <property type="molecule type" value="Genomic_DNA"/>
</dbReference>
<dbReference type="EMBL" id="X14004">
    <property type="protein sequence ID" value="CAA32170.1"/>
    <property type="molecule type" value="mRNA"/>
</dbReference>
<dbReference type="EMBL" id="M27501">
    <property type="protein sequence ID" value="AAA39986.1"/>
    <property type="molecule type" value="mRNA"/>
</dbReference>
<dbReference type="EMBL" id="Z47352">
    <property type="protein sequence ID" value="CAA87411.1"/>
    <property type="molecule type" value="Genomic_DNA"/>
</dbReference>
<dbReference type="EMBL" id="BC049612">
    <property type="protein sequence ID" value="AAH49612.1"/>
    <property type="molecule type" value="mRNA"/>
</dbReference>
<dbReference type="CCDS" id="CCDS27955.1"/>
<dbReference type="PIR" id="A27809">
    <property type="entry name" value="A29995"/>
</dbReference>
<dbReference type="RefSeq" id="NP_032959.1">
    <property type="nucleotide sequence ID" value="NM_008933.2"/>
</dbReference>
<dbReference type="FunCoup" id="P07978">
    <property type="interactions" value="106"/>
</dbReference>
<dbReference type="STRING" id="10090.ENSMUSP00000139898"/>
<dbReference type="iPTMnet" id="P07978"/>
<dbReference type="PhosphoSitePlus" id="P07978"/>
<dbReference type="PaxDb" id="10090-ENSMUSP00000047925"/>
<dbReference type="ProteomicsDB" id="291660"/>
<dbReference type="Antibodypedia" id="58005">
    <property type="antibodies" value="55 antibodies from 15 providers"/>
</dbReference>
<dbReference type="DNASU" id="19119"/>
<dbReference type="Ensembl" id="ENSMUST00000037996.7">
    <property type="protein sequence ID" value="ENSMUSP00000047925.6"/>
    <property type="gene ID" value="ENSMUSG00000038015.7"/>
</dbReference>
<dbReference type="Ensembl" id="ENSMUST00000189593.2">
    <property type="protein sequence ID" value="ENSMUSP00000139898.2"/>
    <property type="gene ID" value="ENSMUSG00000038015.7"/>
</dbReference>
<dbReference type="GeneID" id="19119"/>
<dbReference type="KEGG" id="mmu:19119"/>
<dbReference type="UCSC" id="uc007yeh.1">
    <property type="organism name" value="mouse"/>
</dbReference>
<dbReference type="AGR" id="MGI:97766"/>
<dbReference type="CTD" id="5620"/>
<dbReference type="MGI" id="MGI:97766">
    <property type="gene designation" value="Prm2"/>
</dbReference>
<dbReference type="VEuPathDB" id="HostDB:ENSMUSG00000038015"/>
<dbReference type="eggNOG" id="ENOG502TD5P">
    <property type="taxonomic scope" value="Eukaryota"/>
</dbReference>
<dbReference type="GeneTree" id="ENSGT00940000163619"/>
<dbReference type="HOGENOM" id="CLU_175685_0_0_1"/>
<dbReference type="InParanoid" id="P07978"/>
<dbReference type="OMA" id="PCAPIPG"/>
<dbReference type="OrthoDB" id="9634608at2759"/>
<dbReference type="TreeFam" id="TF338206"/>
<dbReference type="BioGRID-ORCS" id="19119">
    <property type="hits" value="3 hits in 78 CRISPR screens"/>
</dbReference>
<dbReference type="ChiTaRS" id="Prm2">
    <property type="organism name" value="mouse"/>
</dbReference>
<dbReference type="PRO" id="PR:P07978"/>
<dbReference type="Proteomes" id="UP000000589">
    <property type="component" value="Chromosome 16"/>
</dbReference>
<dbReference type="RNAct" id="P07978">
    <property type="molecule type" value="protein"/>
</dbReference>
<dbReference type="Bgee" id="ENSMUSG00000038015">
    <property type="expression patterns" value="Expressed in seminiferous tubule of testis and 26 other cell types or tissues"/>
</dbReference>
<dbReference type="ExpressionAtlas" id="P07978">
    <property type="expression patterns" value="baseline and differential"/>
</dbReference>
<dbReference type="GO" id="GO:0001673">
    <property type="term" value="C:male germ cell nucleus"/>
    <property type="evidence" value="ECO:0000314"/>
    <property type="project" value="MGI"/>
</dbReference>
<dbReference type="GO" id="GO:0005654">
    <property type="term" value="C:nucleoplasm"/>
    <property type="evidence" value="ECO:0000304"/>
    <property type="project" value="Reactome"/>
</dbReference>
<dbReference type="GO" id="GO:0000786">
    <property type="term" value="C:nucleosome"/>
    <property type="evidence" value="ECO:0007669"/>
    <property type="project" value="UniProtKB-KW"/>
</dbReference>
<dbReference type="GO" id="GO:0005634">
    <property type="term" value="C:nucleus"/>
    <property type="evidence" value="ECO:0000314"/>
    <property type="project" value="MGI"/>
</dbReference>
<dbReference type="GO" id="GO:0046870">
    <property type="term" value="F:cadmium ion binding"/>
    <property type="evidence" value="ECO:0007669"/>
    <property type="project" value="Ensembl"/>
</dbReference>
<dbReference type="GO" id="GO:0003677">
    <property type="term" value="F:DNA binding"/>
    <property type="evidence" value="ECO:0000304"/>
    <property type="project" value="MGI"/>
</dbReference>
<dbReference type="GO" id="GO:0008270">
    <property type="term" value="F:zinc ion binding"/>
    <property type="evidence" value="ECO:0007669"/>
    <property type="project" value="Ensembl"/>
</dbReference>
<dbReference type="GO" id="GO:0030261">
    <property type="term" value="P:chromosome condensation"/>
    <property type="evidence" value="ECO:0000304"/>
    <property type="project" value="MGI"/>
</dbReference>
<dbReference type="GO" id="GO:0006997">
    <property type="term" value="P:nucleus organization"/>
    <property type="evidence" value="ECO:0000315"/>
    <property type="project" value="MGI"/>
</dbReference>
<dbReference type="GO" id="GO:0007286">
    <property type="term" value="P:spermatid development"/>
    <property type="evidence" value="ECO:0000315"/>
    <property type="project" value="MGI"/>
</dbReference>
<dbReference type="GO" id="GO:0007283">
    <property type="term" value="P:spermatogenesis"/>
    <property type="evidence" value="ECO:0000315"/>
    <property type="project" value="UniProtKB"/>
</dbReference>
<dbReference type="InterPro" id="IPR000492">
    <property type="entry name" value="PRM2"/>
</dbReference>
<dbReference type="PANTHER" id="PTHR21341">
    <property type="entry name" value="PROTAMINE-2"/>
    <property type="match status" value="1"/>
</dbReference>
<dbReference type="PANTHER" id="PTHR21341:SF2">
    <property type="entry name" value="PROTAMINE-2"/>
    <property type="match status" value="1"/>
</dbReference>
<dbReference type="Pfam" id="PF00841">
    <property type="entry name" value="Protamine_P2"/>
    <property type="match status" value="1"/>
</dbReference>
<sequence>MVRYRMRSPSEGPHQGPGQDHEREEQGQGQGLSPERVEDYGRTHRGHHHHRHRRCSRKRLHRIHKRRRSCRRRRRHSCRHRRRHRRGCRRSRRRRRCRCRKCRRHHH</sequence>
<feature type="initiator methionine" description="Removed" evidence="9">
    <location>
        <position position="1"/>
    </location>
</feature>
<feature type="chain" id="PRO_0000025790" description="PP2-A" evidence="10">
    <location>
        <begin position="2"/>
        <end position="107"/>
    </location>
</feature>
<feature type="chain" id="PRO_0000025791" description="PP2-C" evidence="10">
    <location>
        <begin position="12"/>
        <end position="107"/>
    </location>
</feature>
<feature type="chain" id="PRO_0000025792" description="PP2-D" evidence="10">
    <location>
        <begin position="21"/>
        <end position="107"/>
    </location>
</feature>
<feature type="chain" id="PRO_0000025793" description="PP2-B" evidence="7 10 11">
    <location>
        <begin position="45"/>
        <end position="107"/>
    </location>
</feature>
<feature type="region of interest" description="Disordered" evidence="2">
    <location>
        <begin position="1"/>
        <end position="94"/>
    </location>
</feature>
<feature type="compositionally biased region" description="Basic residues" evidence="2">
    <location>
        <begin position="43"/>
        <end position="94"/>
    </location>
</feature>
<feature type="modified residue" description="Phosphoserine" evidence="1">
    <location>
        <position position="8"/>
    </location>
</feature>
<feature type="modified residue" description="Phosphoserine" evidence="1">
    <location>
        <position position="10"/>
    </location>
</feature>
<feature type="modified residue" description="Phosphoserine" evidence="1">
    <location>
        <position position="33"/>
    </location>
</feature>
<name>PRM2_MOUSE</name>
<evidence type="ECO:0000250" key="1">
    <source>
        <dbReference type="UniProtKB" id="P11248"/>
    </source>
</evidence>
<evidence type="ECO:0000256" key="2">
    <source>
        <dbReference type="SAM" id="MobiDB-lite"/>
    </source>
</evidence>
<evidence type="ECO:0000269" key="3">
    <source>
    </source>
</evidence>
<evidence type="ECO:0000269" key="4">
    <source>
    </source>
</evidence>
<evidence type="ECO:0000269" key="5">
    <source>
    </source>
</evidence>
<evidence type="ECO:0000269" key="6">
    <source>
    </source>
</evidence>
<evidence type="ECO:0000269" key="7">
    <source>
    </source>
</evidence>
<evidence type="ECO:0000303" key="8">
    <source>
    </source>
</evidence>
<evidence type="ECO:0000305" key="9"/>
<evidence type="ECO:0000305" key="10">
    <source>
    </source>
</evidence>
<evidence type="ECO:0000305" key="11">
    <source>
    </source>
</evidence>